<reference key="1">
    <citation type="journal article" date="2005" name="Genome Biol.">
        <title>Full-length cDNAs from chicken bursal lymphocytes to facilitate gene function analysis.</title>
        <authorList>
            <person name="Caldwell R.B."/>
            <person name="Kierzek A.M."/>
            <person name="Arakawa H."/>
            <person name="Bezzubov Y."/>
            <person name="Zaim J."/>
            <person name="Fiedler P."/>
            <person name="Kutter S."/>
            <person name="Blagodatski A."/>
            <person name="Kostovska D."/>
            <person name="Koter M."/>
            <person name="Plachy J."/>
            <person name="Carninci P."/>
            <person name="Hayashizaki Y."/>
            <person name="Buerstedde J.-M."/>
        </authorList>
    </citation>
    <scope>NUCLEOTIDE SEQUENCE [LARGE SCALE MRNA]</scope>
    <source>
        <strain>CB</strain>
        <tissue>Bursa of Fabricius</tissue>
    </source>
</reference>
<keyword id="KW-0067">ATP-binding</keyword>
<keyword id="KW-0418">Kinase</keyword>
<keyword id="KW-0460">Magnesium</keyword>
<keyword id="KW-0479">Metal-binding</keyword>
<keyword id="KW-0545">Nucleotide biosynthesis</keyword>
<keyword id="KW-0547">Nucleotide-binding</keyword>
<keyword id="KW-1185">Reference proteome</keyword>
<keyword id="KW-0808">Transferase</keyword>
<organism>
    <name type="scientific">Gallus gallus</name>
    <name type="common">Chicken</name>
    <dbReference type="NCBI Taxonomy" id="9031"/>
    <lineage>
        <taxon>Eukaryota</taxon>
        <taxon>Metazoa</taxon>
        <taxon>Chordata</taxon>
        <taxon>Craniata</taxon>
        <taxon>Vertebrata</taxon>
        <taxon>Euteleostomi</taxon>
        <taxon>Archelosauria</taxon>
        <taxon>Archosauria</taxon>
        <taxon>Dinosauria</taxon>
        <taxon>Saurischia</taxon>
        <taxon>Theropoda</taxon>
        <taxon>Coelurosauria</taxon>
        <taxon>Aves</taxon>
        <taxon>Neognathae</taxon>
        <taxon>Galloanserae</taxon>
        <taxon>Galliformes</taxon>
        <taxon>Phasianidae</taxon>
        <taxon>Phasianinae</taxon>
        <taxon>Gallus</taxon>
    </lineage>
</organism>
<evidence type="ECO:0000250" key="1"/>
<evidence type="ECO:0000255" key="2"/>
<evidence type="ECO:0000305" key="3"/>
<proteinExistence type="evidence at transcript level"/>
<sequence>MPNIVLFSGSSHHDLSQRVADRLGLELGKVVTKKFSNQETSVEIGESVRGEDVYIIQSGCGEINDNLMELLIMINACKIASSSRVTAVIPCFPYARQDKKDKKGAVERWSRAPISAKLVANMLSVAGADHIITMDLHASQIQGFFDIPVDNLYAEPAVLQWIKENILEWKNCIIVSPDAGGAKRVTSIADRLNVEFALIHKERKKANEVDRMVLVGDVKDRVAILVDDMADTCGTICHAADKLVSAGATKVYAILTHGIFSGPAISRINNAAFEAVVVTNTIPQEEKMKHCPKIQFIDISMILAEAIRRTHNGESVSYLFSHVPL</sequence>
<comment type="function">
    <text>Catalyzes the synthesis of phosphoribosylpyrophosphate (PRPP) that is essential for nucleotide synthesis.</text>
</comment>
<comment type="catalytic activity">
    <reaction>
        <text>D-ribose 5-phosphate + ATP = 5-phospho-alpha-D-ribose 1-diphosphate + AMP + H(+)</text>
        <dbReference type="Rhea" id="RHEA:15609"/>
        <dbReference type="ChEBI" id="CHEBI:15378"/>
        <dbReference type="ChEBI" id="CHEBI:30616"/>
        <dbReference type="ChEBI" id="CHEBI:58017"/>
        <dbReference type="ChEBI" id="CHEBI:78346"/>
        <dbReference type="ChEBI" id="CHEBI:456215"/>
        <dbReference type="EC" id="2.7.6.1"/>
    </reaction>
</comment>
<comment type="cofactor">
    <cofactor evidence="1">
        <name>Mg(2+)</name>
        <dbReference type="ChEBI" id="CHEBI:18420"/>
    </cofactor>
</comment>
<comment type="activity regulation">
    <text evidence="1">Activated by magnesium and inorganic phosphate. Competitively or non-competitively inhibited by ADP, 2,3-bisphosphoglyceride or GDP (By similarity).</text>
</comment>
<comment type="pathway">
    <text>Metabolic intermediate biosynthesis; 5-phospho-alpha-D-ribose 1-diphosphate biosynthesis; 5-phospho-alpha-D-ribose 1-diphosphate from D-ribose 5-phosphate (route I): step 1/1.</text>
</comment>
<comment type="subunit">
    <text evidence="1">Homodimer. The active form is probably a hexamer composed of 3 homodimers (By similarity).</text>
</comment>
<comment type="similarity">
    <text evidence="3">Belongs to the ribose-phosphate pyrophosphokinase family.</text>
</comment>
<protein>
    <recommendedName>
        <fullName>Ribose-phosphate pyrophosphokinase 2</fullName>
        <ecNumber>2.7.6.1</ecNumber>
    </recommendedName>
    <alternativeName>
        <fullName>Phosphoribosyl pyrophosphate synthase II</fullName>
        <shortName>PRS-II</shortName>
    </alternativeName>
</protein>
<dbReference type="EC" id="2.7.6.1"/>
<dbReference type="EMBL" id="AJ720935">
    <property type="protein sequence ID" value="CAG32594.1"/>
    <property type="molecule type" value="mRNA"/>
</dbReference>
<dbReference type="RefSeq" id="NP_001006264.1">
    <property type="nucleotide sequence ID" value="NM_001006264.2"/>
</dbReference>
<dbReference type="SMR" id="Q5ZI49"/>
<dbReference type="FunCoup" id="Q5ZI49">
    <property type="interactions" value="939"/>
</dbReference>
<dbReference type="STRING" id="9031.ENSGALP00000026729"/>
<dbReference type="PaxDb" id="9031-ENSGALP00000026729"/>
<dbReference type="Ensembl" id="ENSGALT00000026780">
    <property type="protein sequence ID" value="ENSGALP00000026729"/>
    <property type="gene ID" value="ENSGALG00000016592"/>
</dbReference>
<dbReference type="Ensembl" id="ENSGALT00010004346.1">
    <property type="protein sequence ID" value="ENSGALP00010002624.1"/>
    <property type="gene ID" value="ENSGALG00010001901.1"/>
</dbReference>
<dbReference type="GeneID" id="418639"/>
<dbReference type="KEGG" id="gga:418639"/>
<dbReference type="CTD" id="5634"/>
<dbReference type="VEuPathDB" id="HostDB:geneid_418639"/>
<dbReference type="eggNOG" id="KOG1448">
    <property type="taxonomic scope" value="Eukaryota"/>
</dbReference>
<dbReference type="GeneTree" id="ENSGT00950000182803"/>
<dbReference type="HOGENOM" id="CLU_033546_4_0_1"/>
<dbReference type="InParanoid" id="Q5ZI49"/>
<dbReference type="OMA" id="LLPEHKC"/>
<dbReference type="OrthoDB" id="413572at2759"/>
<dbReference type="PhylomeDB" id="Q5ZI49"/>
<dbReference type="TreeFam" id="TF106366"/>
<dbReference type="UniPathway" id="UPA00087">
    <property type="reaction ID" value="UER00172"/>
</dbReference>
<dbReference type="PRO" id="PR:Q5ZI49"/>
<dbReference type="Proteomes" id="UP000000539">
    <property type="component" value="Chromosome 1"/>
</dbReference>
<dbReference type="GO" id="GO:0005829">
    <property type="term" value="C:cytosol"/>
    <property type="evidence" value="ECO:0007669"/>
    <property type="project" value="Ensembl"/>
</dbReference>
<dbReference type="GO" id="GO:0005524">
    <property type="term" value="F:ATP binding"/>
    <property type="evidence" value="ECO:0000250"/>
    <property type="project" value="UniProtKB"/>
</dbReference>
<dbReference type="GO" id="GO:0016301">
    <property type="term" value="F:kinase activity"/>
    <property type="evidence" value="ECO:0007669"/>
    <property type="project" value="UniProtKB-KW"/>
</dbReference>
<dbReference type="GO" id="GO:0000287">
    <property type="term" value="F:magnesium ion binding"/>
    <property type="evidence" value="ECO:0007669"/>
    <property type="project" value="InterPro"/>
</dbReference>
<dbReference type="GO" id="GO:0042803">
    <property type="term" value="F:protein homodimerization activity"/>
    <property type="evidence" value="ECO:0000250"/>
    <property type="project" value="UniProtKB"/>
</dbReference>
<dbReference type="GO" id="GO:0004749">
    <property type="term" value="F:ribose phosphate diphosphokinase activity"/>
    <property type="evidence" value="ECO:0000250"/>
    <property type="project" value="UniProtKB"/>
</dbReference>
<dbReference type="GO" id="GO:0006015">
    <property type="term" value="P:5-phosphoribose 1-diphosphate biosynthetic process"/>
    <property type="evidence" value="ECO:0007669"/>
    <property type="project" value="UniProtKB-UniPathway"/>
</dbReference>
<dbReference type="GO" id="GO:0009165">
    <property type="term" value="P:nucleotide biosynthetic process"/>
    <property type="evidence" value="ECO:0007669"/>
    <property type="project" value="UniProtKB-KW"/>
</dbReference>
<dbReference type="GO" id="GO:0006098">
    <property type="term" value="P:pentose-phosphate shunt"/>
    <property type="evidence" value="ECO:0007669"/>
    <property type="project" value="Ensembl"/>
</dbReference>
<dbReference type="GO" id="GO:0009156">
    <property type="term" value="P:ribonucleoside monophosphate biosynthetic process"/>
    <property type="evidence" value="ECO:0007669"/>
    <property type="project" value="InterPro"/>
</dbReference>
<dbReference type="CDD" id="cd06223">
    <property type="entry name" value="PRTases_typeI"/>
    <property type="match status" value="1"/>
</dbReference>
<dbReference type="FunFam" id="3.40.50.2020:FF:000011">
    <property type="entry name" value="Putative ribose-phosphate pyrophosphokinase 1"/>
    <property type="match status" value="1"/>
</dbReference>
<dbReference type="Gene3D" id="3.40.50.2020">
    <property type="match status" value="2"/>
</dbReference>
<dbReference type="HAMAP" id="MF_00583_B">
    <property type="entry name" value="RibP_PPkinase_B"/>
    <property type="match status" value="1"/>
</dbReference>
<dbReference type="InterPro" id="IPR000842">
    <property type="entry name" value="PRib_PP_synth_CS"/>
</dbReference>
<dbReference type="InterPro" id="IPR029099">
    <property type="entry name" value="Pribosyltran_N"/>
</dbReference>
<dbReference type="InterPro" id="IPR000836">
    <property type="entry name" value="PRibTrfase_dom"/>
</dbReference>
<dbReference type="InterPro" id="IPR029057">
    <property type="entry name" value="PRTase-like"/>
</dbReference>
<dbReference type="InterPro" id="IPR005946">
    <property type="entry name" value="Rib-P_diPkinase"/>
</dbReference>
<dbReference type="InterPro" id="IPR037515">
    <property type="entry name" value="Rib-P_diPkinase_bac"/>
</dbReference>
<dbReference type="NCBIfam" id="NF002320">
    <property type="entry name" value="PRK01259.1"/>
    <property type="match status" value="1"/>
</dbReference>
<dbReference type="NCBIfam" id="TIGR01251">
    <property type="entry name" value="ribP_PPkin"/>
    <property type="match status" value="1"/>
</dbReference>
<dbReference type="PANTHER" id="PTHR10210">
    <property type="entry name" value="RIBOSE-PHOSPHATE DIPHOSPHOKINASE FAMILY MEMBER"/>
    <property type="match status" value="1"/>
</dbReference>
<dbReference type="PANTHER" id="PTHR10210:SF32">
    <property type="entry name" value="RIBOSE-PHOSPHATE PYROPHOSPHOKINASE 2"/>
    <property type="match status" value="1"/>
</dbReference>
<dbReference type="Pfam" id="PF14572">
    <property type="entry name" value="Pribosyl_synth"/>
    <property type="match status" value="1"/>
</dbReference>
<dbReference type="Pfam" id="PF13793">
    <property type="entry name" value="Pribosyltran_N"/>
    <property type="match status" value="1"/>
</dbReference>
<dbReference type="SMART" id="SM01400">
    <property type="entry name" value="Pribosyltran_N"/>
    <property type="match status" value="1"/>
</dbReference>
<dbReference type="SUPFAM" id="SSF53271">
    <property type="entry name" value="PRTase-like"/>
    <property type="match status" value="1"/>
</dbReference>
<dbReference type="PROSITE" id="PS00114">
    <property type="entry name" value="PRPP_SYNTHASE"/>
    <property type="match status" value="1"/>
</dbReference>
<gene>
    <name type="primary">PRPS2</name>
    <name type="ORF">RCJMB04_30f3</name>
</gene>
<feature type="initiator methionine" description="Removed" evidence="1">
    <location>
        <position position="1"/>
    </location>
</feature>
<feature type="chain" id="PRO_0000294082" description="Ribose-phosphate pyrophosphokinase 2">
    <location>
        <begin position="2"/>
        <end position="325"/>
    </location>
</feature>
<feature type="region of interest" description="Binding of phosphoribosylpyrophosphate" evidence="2">
    <location>
        <begin position="219"/>
        <end position="234"/>
    </location>
</feature>
<feature type="binding site" evidence="1">
    <location>
        <begin position="96"/>
        <end position="101"/>
    </location>
    <ligand>
        <name>ATP</name>
        <dbReference type="ChEBI" id="CHEBI:30616"/>
    </ligand>
</feature>
<feature type="binding site" evidence="2">
    <location>
        <position position="135"/>
    </location>
    <ligand>
        <name>Mg(2+)</name>
        <dbReference type="ChEBI" id="CHEBI:18420"/>
    </ligand>
</feature>
<feature type="binding site" evidence="1">
    <location>
        <position position="137"/>
    </location>
    <ligand>
        <name>ATP</name>
        <dbReference type="ChEBI" id="CHEBI:30616"/>
    </ligand>
</feature>
<feature type="binding site" evidence="2">
    <location>
        <position position="137"/>
    </location>
    <ligand>
        <name>Mg(2+)</name>
        <dbReference type="ChEBI" id="CHEBI:18420"/>
    </ligand>
</feature>
<feature type="binding site" evidence="2">
    <location>
        <position position="146"/>
    </location>
    <ligand>
        <name>Mg(2+)</name>
        <dbReference type="ChEBI" id="CHEBI:18420"/>
    </ligand>
</feature>
<feature type="binding site" evidence="2">
    <location>
        <position position="150"/>
    </location>
    <ligand>
        <name>Mg(2+)</name>
        <dbReference type="ChEBI" id="CHEBI:18420"/>
    </ligand>
</feature>
<name>PRPS2_CHICK</name>
<accession>Q5ZI49</accession>